<protein>
    <recommendedName>
        <fullName>Hemoglobin subunit beta</fullName>
    </recommendedName>
    <alternativeName>
        <fullName>Beta-globin</fullName>
    </alternativeName>
    <alternativeName>
        <fullName>Hemoglobin beta chain</fullName>
    </alternativeName>
</protein>
<name>HBB_ANSAN</name>
<proteinExistence type="evidence at protein level"/>
<sequence>VHWSAEEKQLITGLWGKVNVADCGAEALARLLIVYPWTQRFFSSFGNLSSPTAILGNPMVRAHGKKVLTSFGDAVKNLDNIKNTFAQLSELHCDKLHVDPENFRLLGDILIIVLAAHFAKEFTPECQAAWQKLVRVVAHALARKYH</sequence>
<accession>P02117</accession>
<evidence type="ECO:0000255" key="1">
    <source>
        <dbReference type="PROSITE-ProRule" id="PRU00238"/>
    </source>
</evidence>
<evidence type="ECO:0007829" key="2">
    <source>
        <dbReference type="PDB" id="1FAW"/>
    </source>
</evidence>
<comment type="function">
    <text>Involved in oxygen transport from the lung to the various peripheral tissues.</text>
</comment>
<comment type="subunit">
    <text>Heterotetramer of two alpha chains and two beta chains.</text>
</comment>
<comment type="tissue specificity">
    <text>Red blood cells.</text>
</comment>
<comment type="similarity">
    <text evidence="1">Belongs to the globin family.</text>
</comment>
<organism>
    <name type="scientific">Anser anser anser</name>
    <name type="common">Western greylag goose</name>
    <dbReference type="NCBI Taxonomy" id="8844"/>
    <lineage>
        <taxon>Eukaryota</taxon>
        <taxon>Metazoa</taxon>
        <taxon>Chordata</taxon>
        <taxon>Craniata</taxon>
        <taxon>Vertebrata</taxon>
        <taxon>Euteleostomi</taxon>
        <taxon>Archelosauria</taxon>
        <taxon>Archosauria</taxon>
        <taxon>Dinosauria</taxon>
        <taxon>Saurischia</taxon>
        <taxon>Theropoda</taxon>
        <taxon>Coelurosauria</taxon>
        <taxon>Aves</taxon>
        <taxon>Neognathae</taxon>
        <taxon>Galloanserae</taxon>
        <taxon>Anseriformes</taxon>
        <taxon>Anatidae</taxon>
        <taxon>Anserinae</taxon>
        <taxon>Anser</taxon>
    </lineage>
</organism>
<feature type="chain" id="PRO_0000052872" description="Hemoglobin subunit beta">
    <location>
        <begin position="1"/>
        <end position="146"/>
    </location>
</feature>
<feature type="domain" description="Globin" evidence="1">
    <location>
        <begin position="2"/>
        <end position="146"/>
    </location>
</feature>
<feature type="binding site" description="distal binding residue">
    <location>
        <position position="63"/>
    </location>
    <ligand>
        <name>heme b</name>
        <dbReference type="ChEBI" id="CHEBI:60344"/>
    </ligand>
    <ligandPart>
        <name>Fe</name>
        <dbReference type="ChEBI" id="CHEBI:18248"/>
    </ligandPart>
</feature>
<feature type="binding site" description="proximal binding residue">
    <location>
        <position position="92"/>
    </location>
    <ligand>
        <name>heme b</name>
        <dbReference type="ChEBI" id="CHEBI:60344"/>
    </ligand>
    <ligandPart>
        <name>Fe</name>
        <dbReference type="ChEBI" id="CHEBI:18248"/>
    </ligandPart>
</feature>
<feature type="helix" evidence="2">
    <location>
        <begin position="5"/>
        <end position="15"/>
    </location>
</feature>
<feature type="helix" evidence="2">
    <location>
        <begin position="20"/>
        <end position="34"/>
    </location>
</feature>
<feature type="helix" evidence="2">
    <location>
        <begin position="36"/>
        <end position="45"/>
    </location>
</feature>
<feature type="helix" evidence="2">
    <location>
        <begin position="51"/>
        <end position="56"/>
    </location>
</feature>
<feature type="helix" evidence="2">
    <location>
        <begin position="58"/>
        <end position="76"/>
    </location>
</feature>
<feature type="helix" evidence="2">
    <location>
        <begin position="78"/>
        <end position="80"/>
    </location>
</feature>
<feature type="helix" evidence="2">
    <location>
        <begin position="81"/>
        <end position="84"/>
    </location>
</feature>
<feature type="helix" evidence="2">
    <location>
        <begin position="86"/>
        <end position="93"/>
    </location>
</feature>
<feature type="helix" evidence="2">
    <location>
        <begin position="101"/>
        <end position="118"/>
    </location>
</feature>
<feature type="helix" evidence="2">
    <location>
        <begin position="119"/>
        <end position="121"/>
    </location>
</feature>
<feature type="helix" evidence="2">
    <location>
        <begin position="124"/>
        <end position="141"/>
    </location>
</feature>
<feature type="turn" evidence="2">
    <location>
        <begin position="142"/>
        <end position="145"/>
    </location>
</feature>
<dbReference type="PIR" id="A02437">
    <property type="entry name" value="HBGS"/>
</dbReference>
<dbReference type="PDB" id="1FAW">
    <property type="method" value="X-ray"/>
    <property type="resolution" value="3.09 A"/>
    <property type="chains" value="B/D=1-146"/>
</dbReference>
<dbReference type="PDBsum" id="1FAW"/>
<dbReference type="SMR" id="P02117"/>
<dbReference type="EvolutionaryTrace" id="P02117"/>
<dbReference type="GO" id="GO:0072562">
    <property type="term" value="C:blood microparticle"/>
    <property type="evidence" value="ECO:0007669"/>
    <property type="project" value="TreeGrafter"/>
</dbReference>
<dbReference type="GO" id="GO:0031838">
    <property type="term" value="C:haptoglobin-hemoglobin complex"/>
    <property type="evidence" value="ECO:0007669"/>
    <property type="project" value="TreeGrafter"/>
</dbReference>
<dbReference type="GO" id="GO:0005833">
    <property type="term" value="C:hemoglobin complex"/>
    <property type="evidence" value="ECO:0007669"/>
    <property type="project" value="InterPro"/>
</dbReference>
<dbReference type="GO" id="GO:0031720">
    <property type="term" value="F:haptoglobin binding"/>
    <property type="evidence" value="ECO:0007669"/>
    <property type="project" value="TreeGrafter"/>
</dbReference>
<dbReference type="GO" id="GO:0020037">
    <property type="term" value="F:heme binding"/>
    <property type="evidence" value="ECO:0007669"/>
    <property type="project" value="InterPro"/>
</dbReference>
<dbReference type="GO" id="GO:0046872">
    <property type="term" value="F:metal ion binding"/>
    <property type="evidence" value="ECO:0007669"/>
    <property type="project" value="UniProtKB-KW"/>
</dbReference>
<dbReference type="GO" id="GO:0043177">
    <property type="term" value="F:organic acid binding"/>
    <property type="evidence" value="ECO:0007669"/>
    <property type="project" value="TreeGrafter"/>
</dbReference>
<dbReference type="GO" id="GO:0019825">
    <property type="term" value="F:oxygen binding"/>
    <property type="evidence" value="ECO:0007669"/>
    <property type="project" value="InterPro"/>
</dbReference>
<dbReference type="GO" id="GO:0005344">
    <property type="term" value="F:oxygen carrier activity"/>
    <property type="evidence" value="ECO:0007669"/>
    <property type="project" value="UniProtKB-KW"/>
</dbReference>
<dbReference type="GO" id="GO:0004601">
    <property type="term" value="F:peroxidase activity"/>
    <property type="evidence" value="ECO:0007669"/>
    <property type="project" value="TreeGrafter"/>
</dbReference>
<dbReference type="GO" id="GO:0042744">
    <property type="term" value="P:hydrogen peroxide catabolic process"/>
    <property type="evidence" value="ECO:0007669"/>
    <property type="project" value="TreeGrafter"/>
</dbReference>
<dbReference type="CDD" id="cd08925">
    <property type="entry name" value="Hb-beta-like"/>
    <property type="match status" value="1"/>
</dbReference>
<dbReference type="FunFam" id="1.10.490.10:FF:000001">
    <property type="entry name" value="Hemoglobin subunit beta"/>
    <property type="match status" value="1"/>
</dbReference>
<dbReference type="Gene3D" id="1.10.490.10">
    <property type="entry name" value="Globins"/>
    <property type="match status" value="1"/>
</dbReference>
<dbReference type="InterPro" id="IPR000971">
    <property type="entry name" value="Globin"/>
</dbReference>
<dbReference type="InterPro" id="IPR009050">
    <property type="entry name" value="Globin-like_sf"/>
</dbReference>
<dbReference type="InterPro" id="IPR012292">
    <property type="entry name" value="Globin/Proto"/>
</dbReference>
<dbReference type="InterPro" id="IPR002337">
    <property type="entry name" value="Hemoglobin_b"/>
</dbReference>
<dbReference type="InterPro" id="IPR050056">
    <property type="entry name" value="Hemoglobin_oxygen_transport"/>
</dbReference>
<dbReference type="PANTHER" id="PTHR11442">
    <property type="entry name" value="HEMOGLOBIN FAMILY MEMBER"/>
    <property type="match status" value="1"/>
</dbReference>
<dbReference type="PANTHER" id="PTHR11442:SF7">
    <property type="entry name" value="HEMOGLOBIN SUBUNIT EPSILON"/>
    <property type="match status" value="1"/>
</dbReference>
<dbReference type="Pfam" id="PF00042">
    <property type="entry name" value="Globin"/>
    <property type="match status" value="1"/>
</dbReference>
<dbReference type="PRINTS" id="PR00814">
    <property type="entry name" value="BETAHAEM"/>
</dbReference>
<dbReference type="SUPFAM" id="SSF46458">
    <property type="entry name" value="Globin-like"/>
    <property type="match status" value="1"/>
</dbReference>
<dbReference type="PROSITE" id="PS01033">
    <property type="entry name" value="GLOBIN"/>
    <property type="match status" value="1"/>
</dbReference>
<gene>
    <name type="primary">HBB</name>
</gene>
<keyword id="KW-0002">3D-structure</keyword>
<keyword id="KW-0903">Direct protein sequencing</keyword>
<keyword id="KW-0349">Heme</keyword>
<keyword id="KW-0408">Iron</keyword>
<keyword id="KW-0479">Metal-binding</keyword>
<keyword id="KW-0561">Oxygen transport</keyword>
<keyword id="KW-0813">Transport</keyword>
<reference key="1">
    <citation type="journal article" date="1981" name="Hoppe-Seyler's Z. Physiol. Chem.">
        <title>Hemoglobins, XLII. Studies on the hemoglobin of the greylag goose (Anser anser). The primary structures of the alpha- and beta-chains of the main component.</title>
        <authorList>
            <person name="Oberthur W."/>
            <person name="Braunitzer G."/>
            <person name="Kalas S."/>
        </authorList>
    </citation>
    <scope>PROTEIN SEQUENCE</scope>
</reference>
<reference key="2">
    <citation type="journal article" date="2001" name="Acta Crystallogr. D">
        <title>The structure of greylag goose oxy haemoglobin: the roles of four mutations compared with bar-headed goose haemoglobin.</title>
        <authorList>
            <person name="Liang Y.H."/>
            <person name="Liu X.Z."/>
            <person name="Liu S.H."/>
            <person name="Lu G.Y."/>
        </authorList>
    </citation>
    <scope>X-RAY CRYSTALLOGRAPHY (3.09 ANGSTROMS)</scope>
</reference>